<evidence type="ECO:0000250" key="1"/>
<evidence type="ECO:0000269" key="2">
    <source>
    </source>
</evidence>
<evidence type="ECO:0000305" key="3"/>
<evidence type="ECO:0000305" key="4">
    <source>
    </source>
</evidence>
<evidence type="ECO:0007829" key="5">
    <source>
        <dbReference type="PDB" id="4DPL"/>
    </source>
</evidence>
<accession>Q96YK1</accession>
<gene>
    <name type="primary">mcr</name>
    <name type="synonym">scr</name>
    <name type="ordered locus">STK_21710</name>
</gene>
<name>MCR_SULTO</name>
<dbReference type="EC" id="1.2.1.75"/>
<dbReference type="EMBL" id="BA000023">
    <property type="protein sequence ID" value="BAB67276.1"/>
    <property type="molecule type" value="Genomic_DNA"/>
</dbReference>
<dbReference type="PDB" id="4DPK">
    <property type="method" value="X-ray"/>
    <property type="resolution" value="2.05 A"/>
    <property type="chains" value="A/B/C/D=1-359"/>
</dbReference>
<dbReference type="PDB" id="4DPL">
    <property type="method" value="X-ray"/>
    <property type="resolution" value="1.90 A"/>
    <property type="chains" value="A/B/C/D=1-359"/>
</dbReference>
<dbReference type="PDB" id="4DPM">
    <property type="method" value="X-ray"/>
    <property type="resolution" value="2.30 A"/>
    <property type="chains" value="A/B/C/D/E/F=1-359"/>
</dbReference>
<dbReference type="PDBsum" id="4DPK"/>
<dbReference type="PDBsum" id="4DPL"/>
<dbReference type="PDBsum" id="4DPM"/>
<dbReference type="SMR" id="Q96YK1"/>
<dbReference type="STRING" id="273063.STK_21710"/>
<dbReference type="KEGG" id="sto:STK_21710"/>
<dbReference type="PATRIC" id="fig|273063.9.peg.2464"/>
<dbReference type="eggNOG" id="arCOG00494">
    <property type="taxonomic scope" value="Archaea"/>
</dbReference>
<dbReference type="BioCyc" id="MetaCyc:MONOMER-13611"/>
<dbReference type="BRENDA" id="1.2.1.75">
    <property type="organism ID" value="15396"/>
</dbReference>
<dbReference type="EvolutionaryTrace" id="Q96YK1"/>
<dbReference type="Proteomes" id="UP000001015">
    <property type="component" value="Chromosome"/>
</dbReference>
<dbReference type="GO" id="GO:0004073">
    <property type="term" value="F:aspartate-semialdehyde dehydrogenase activity"/>
    <property type="evidence" value="ECO:0007669"/>
    <property type="project" value="TreeGrafter"/>
</dbReference>
<dbReference type="GO" id="GO:0051287">
    <property type="term" value="F:NAD binding"/>
    <property type="evidence" value="ECO:0007669"/>
    <property type="project" value="InterPro"/>
</dbReference>
<dbReference type="GO" id="GO:0050661">
    <property type="term" value="F:NADP binding"/>
    <property type="evidence" value="ECO:0007669"/>
    <property type="project" value="InterPro"/>
</dbReference>
<dbReference type="GO" id="GO:0046983">
    <property type="term" value="F:protein dimerization activity"/>
    <property type="evidence" value="ECO:0007669"/>
    <property type="project" value="InterPro"/>
</dbReference>
<dbReference type="GO" id="GO:0003723">
    <property type="term" value="F:RNA binding"/>
    <property type="evidence" value="ECO:0007669"/>
    <property type="project" value="UniProtKB-KW"/>
</dbReference>
<dbReference type="GO" id="GO:0009086">
    <property type="term" value="P:methionine biosynthetic process"/>
    <property type="evidence" value="ECO:0007669"/>
    <property type="project" value="UniProtKB-ARBA"/>
</dbReference>
<dbReference type="GO" id="GO:0009088">
    <property type="term" value="P:threonine biosynthetic process"/>
    <property type="evidence" value="ECO:0007669"/>
    <property type="project" value="TreeGrafter"/>
</dbReference>
<dbReference type="CDD" id="cd23940">
    <property type="entry name" value="ASADH_C_MCR"/>
    <property type="match status" value="1"/>
</dbReference>
<dbReference type="CDD" id="cd24150">
    <property type="entry name" value="ASADH_MCR_N"/>
    <property type="match status" value="1"/>
</dbReference>
<dbReference type="FunFam" id="3.40.50.720:FF:000411">
    <property type="entry name" value="Aspartate-semialdehyde dehydrogenase"/>
    <property type="match status" value="1"/>
</dbReference>
<dbReference type="Gene3D" id="3.30.360.10">
    <property type="entry name" value="Dihydrodipicolinate Reductase, domain 2"/>
    <property type="match status" value="1"/>
</dbReference>
<dbReference type="Gene3D" id="3.40.50.720">
    <property type="entry name" value="NAD(P)-binding Rossmann-like Domain"/>
    <property type="match status" value="1"/>
</dbReference>
<dbReference type="InterPro" id="IPR051823">
    <property type="entry name" value="ASADH-related"/>
</dbReference>
<dbReference type="InterPro" id="IPR005676">
    <property type="entry name" value="Asp_semi-ald_DH_pep-lack"/>
</dbReference>
<dbReference type="InterPro" id="IPR036291">
    <property type="entry name" value="NAD(P)-bd_dom_sf"/>
</dbReference>
<dbReference type="InterPro" id="IPR000534">
    <property type="entry name" value="Semialdehyde_DH_NAD-bd"/>
</dbReference>
<dbReference type="InterPro" id="IPR012280">
    <property type="entry name" value="Semialdhyde_DH_dimer_dom"/>
</dbReference>
<dbReference type="NCBIfam" id="TIGR00978">
    <property type="entry name" value="asd_EA"/>
    <property type="match status" value="1"/>
</dbReference>
<dbReference type="NCBIfam" id="NF006416">
    <property type="entry name" value="PRK08664.1"/>
    <property type="match status" value="1"/>
</dbReference>
<dbReference type="PANTHER" id="PTHR46718">
    <property type="entry name" value="ASPARTATE-SEMIALDEHYDE DEHYDROGENASE"/>
    <property type="match status" value="1"/>
</dbReference>
<dbReference type="PANTHER" id="PTHR46718:SF1">
    <property type="entry name" value="ASPARTATE-SEMIALDEHYDE DEHYDROGENASE"/>
    <property type="match status" value="1"/>
</dbReference>
<dbReference type="Pfam" id="PF01118">
    <property type="entry name" value="Semialdhyde_dh"/>
    <property type="match status" value="1"/>
</dbReference>
<dbReference type="Pfam" id="PF02774">
    <property type="entry name" value="Semialdhyde_dhC"/>
    <property type="match status" value="1"/>
</dbReference>
<dbReference type="PIRSF" id="PIRSF000148">
    <property type="entry name" value="ASA_dh"/>
    <property type="match status" value="1"/>
</dbReference>
<dbReference type="SMART" id="SM00859">
    <property type="entry name" value="Semialdhyde_dh"/>
    <property type="match status" value="1"/>
</dbReference>
<dbReference type="SUPFAM" id="SSF55347">
    <property type="entry name" value="Glyceraldehyde-3-phosphate dehydrogenase-like, C-terminal domain"/>
    <property type="match status" value="1"/>
</dbReference>
<dbReference type="SUPFAM" id="SSF51735">
    <property type="entry name" value="NAD(P)-binding Rossmann-fold domains"/>
    <property type="match status" value="1"/>
</dbReference>
<organism>
    <name type="scientific">Sulfurisphaera tokodaii (strain DSM 16993 / JCM 10545 / NBRC 100140 / 7)</name>
    <name type="common">Sulfolobus tokodaii</name>
    <dbReference type="NCBI Taxonomy" id="273063"/>
    <lineage>
        <taxon>Archaea</taxon>
        <taxon>Thermoproteota</taxon>
        <taxon>Thermoprotei</taxon>
        <taxon>Sulfolobales</taxon>
        <taxon>Sulfolobaceae</taxon>
        <taxon>Sulfurisphaera</taxon>
    </lineage>
</organism>
<keyword id="KW-0002">3D-structure</keyword>
<keyword id="KW-0521">NADP</keyword>
<keyword id="KW-0560">Oxidoreductase</keyword>
<keyword id="KW-1185">Reference proteome</keyword>
<keyword id="KW-0694">RNA-binding</keyword>
<sequence>MILMRRTLKAAILGATGLVGIEYVRMLSNHPYIKPAYLAGKGSVGKPYGEVVRWQTVGQVPKEIADMEIKPTDPKLMDDVDIIFSPLPQGAAGPVEEQFAKEGFPVISNSPDHRFDPDVPLLVPELNPHTISLIDEQRKRREWKGFIVTTPLCTAQGAAIPLGAIFKDYKMDGAFITTIQSLSGAGYPGIPSLDVVDNILPLGDGYDAKTIKEIFRILSEVKRNVDEPKLEDVSLAATTHRIATIHGHYEVLYVSFKEETAAEKVKETLENFRGEPQDLKLPTAPSKPIIVMNEDTRPQVYFDRWAGDIPGMSVVVGRLKQVNKRMIRLVSLIHNTVRGAAGGGILAAELLVEKGYIEK</sequence>
<protein>
    <recommendedName>
        <fullName>Malonyl-CoA reductase</fullName>
        <ecNumber>1.2.1.75</ecNumber>
    </recommendedName>
</protein>
<reference key="1">
    <citation type="journal article" date="2001" name="DNA Res.">
        <title>Complete genome sequence of an aerobic thermoacidophilic Crenarchaeon, Sulfolobus tokodaii strain7.</title>
        <authorList>
            <person name="Kawarabayasi Y."/>
            <person name="Hino Y."/>
            <person name="Horikawa H."/>
            <person name="Jin-no K."/>
            <person name="Takahashi M."/>
            <person name="Sekine M."/>
            <person name="Baba S."/>
            <person name="Ankai A."/>
            <person name="Kosugi H."/>
            <person name="Hosoyama A."/>
            <person name="Fukui S."/>
            <person name="Nagai Y."/>
            <person name="Nishijima K."/>
            <person name="Otsuka R."/>
            <person name="Nakazawa H."/>
            <person name="Takamiya M."/>
            <person name="Kato Y."/>
            <person name="Yoshizawa T."/>
            <person name="Tanaka T."/>
            <person name="Kudoh Y."/>
            <person name="Yamazaki J."/>
            <person name="Kushida N."/>
            <person name="Oguchi A."/>
            <person name="Aoki K."/>
            <person name="Masuda S."/>
            <person name="Yanagii M."/>
            <person name="Nishimura M."/>
            <person name="Yamagishi A."/>
            <person name="Oshima T."/>
            <person name="Kikuchi H."/>
        </authorList>
    </citation>
    <scope>NUCLEOTIDE SEQUENCE [LARGE SCALE GENOMIC DNA]</scope>
    <source>
        <strain>DSM 16993 / JCM 10545 / NBRC 100140 / 7</strain>
    </source>
</reference>
<reference key="2">
    <citation type="journal article" date="2006" name="J. Bacteriol.">
        <title>Malonyl-coenzyme A reductase in the modified 3-hydroxypropionate cycle for autotrophic carbon fixation in archaeal Metallosphaera and Sulfolobus spp.</title>
        <authorList>
            <person name="Alber B."/>
            <person name="Olinger M."/>
            <person name="Rieder A."/>
            <person name="Kockelkorn D."/>
            <person name="Jobst B."/>
            <person name="Hugler M."/>
            <person name="Fuchs G."/>
        </authorList>
    </citation>
    <scope>FUNCTION AS A MALONYL COA REDUCTASE</scope>
    <scope>BIOPHYSICOCHEMICAL PROPERTIES</scope>
    <scope>COFACTOR</scope>
    <scope>SUBSTRATE SPECIFICITY</scope>
    <scope>ACTIVITY REGULATION</scope>
    <scope>SUBUNIT</scope>
    <scope>RNA BINDING</scope>
    <scope>NOMENCLATURE</scope>
    <scope>CATALYTIC ACTIVITY</scope>
</reference>
<feature type="chain" id="PRO_0000418855" description="Malonyl-CoA reductase">
    <location>
        <begin position="1"/>
        <end position="359"/>
    </location>
</feature>
<feature type="active site" description="Acyl-thioester intermediate" evidence="1">
    <location>
        <position position="153"/>
    </location>
</feature>
<feature type="active site" description="Proton acceptor" evidence="1">
    <location>
        <position position="248"/>
    </location>
</feature>
<feature type="binding site" evidence="1">
    <location>
        <begin position="16"/>
        <end position="19"/>
    </location>
    <ligand>
        <name>NADP(+)</name>
        <dbReference type="ChEBI" id="CHEBI:58349"/>
    </ligand>
</feature>
<feature type="binding site" evidence="1">
    <location>
        <begin position="183"/>
        <end position="184"/>
    </location>
    <ligand>
        <name>NADP(+)</name>
        <dbReference type="ChEBI" id="CHEBI:58349"/>
    </ligand>
</feature>
<feature type="binding site" evidence="1">
    <location>
        <begin position="335"/>
        <end position="336"/>
    </location>
    <ligand>
        <name>NADP(+)</name>
        <dbReference type="ChEBI" id="CHEBI:58349"/>
    </ligand>
</feature>
<feature type="strand" evidence="5">
    <location>
        <begin position="8"/>
        <end position="12"/>
    </location>
</feature>
<feature type="turn" evidence="5">
    <location>
        <begin position="13"/>
        <end position="16"/>
    </location>
</feature>
<feature type="helix" evidence="5">
    <location>
        <begin position="20"/>
        <end position="28"/>
    </location>
</feature>
<feature type="strand" evidence="5">
    <location>
        <begin position="31"/>
        <end position="41"/>
    </location>
</feature>
<feature type="turn" evidence="5">
    <location>
        <begin position="42"/>
        <end position="45"/>
    </location>
</feature>
<feature type="helix" evidence="5">
    <location>
        <begin position="48"/>
        <end position="51"/>
    </location>
</feature>
<feature type="strand" evidence="5">
    <location>
        <begin position="56"/>
        <end position="58"/>
    </location>
</feature>
<feature type="helix" evidence="5">
    <location>
        <begin position="62"/>
        <end position="65"/>
    </location>
</feature>
<feature type="helix" evidence="5">
    <location>
        <begin position="74"/>
        <end position="76"/>
    </location>
</feature>
<feature type="strand" evidence="5">
    <location>
        <begin position="82"/>
        <end position="85"/>
    </location>
</feature>
<feature type="turn" evidence="5">
    <location>
        <begin position="89"/>
        <end position="91"/>
    </location>
</feature>
<feature type="helix" evidence="5">
    <location>
        <begin position="92"/>
        <end position="101"/>
    </location>
</feature>
<feature type="strand" evidence="5">
    <location>
        <begin position="105"/>
        <end position="108"/>
    </location>
</feature>
<feature type="turn" evidence="5">
    <location>
        <begin position="112"/>
        <end position="115"/>
    </location>
</feature>
<feature type="turn" evidence="5">
    <location>
        <begin position="124"/>
        <end position="126"/>
    </location>
</feature>
<feature type="helix" evidence="5">
    <location>
        <begin position="128"/>
        <end position="132"/>
    </location>
</feature>
<feature type="helix" evidence="5">
    <location>
        <begin position="133"/>
        <end position="141"/>
    </location>
</feature>
<feature type="strand" evidence="5">
    <location>
        <begin position="144"/>
        <end position="149"/>
    </location>
</feature>
<feature type="helix" evidence="5">
    <location>
        <begin position="153"/>
        <end position="168"/>
    </location>
</feature>
<feature type="strand" evidence="5">
    <location>
        <begin position="171"/>
        <end position="180"/>
    </location>
</feature>
<feature type="helix" evidence="5">
    <location>
        <begin position="182"/>
        <end position="185"/>
    </location>
</feature>
<feature type="helix" evidence="5">
    <location>
        <begin position="192"/>
        <end position="195"/>
    </location>
</feature>
<feature type="helix" evidence="5">
    <location>
        <begin position="204"/>
        <end position="218"/>
    </location>
</feature>
<feature type="helix" evidence="5">
    <location>
        <begin position="230"/>
        <end position="232"/>
    </location>
</feature>
<feature type="strand" evidence="5">
    <location>
        <begin position="234"/>
        <end position="238"/>
    </location>
</feature>
<feature type="strand" evidence="5">
    <location>
        <begin position="248"/>
        <end position="258"/>
    </location>
</feature>
<feature type="helix" evidence="5">
    <location>
        <begin position="262"/>
        <end position="270"/>
    </location>
</feature>
<feature type="helix" evidence="5">
    <location>
        <begin position="275"/>
        <end position="278"/>
    </location>
</feature>
<feature type="strand" evidence="5">
    <location>
        <begin position="288"/>
        <end position="292"/>
    </location>
</feature>
<feature type="helix" evidence="5">
    <location>
        <begin position="300"/>
        <end position="303"/>
    </location>
</feature>
<feature type="turn" evidence="5">
    <location>
        <begin position="307"/>
        <end position="311"/>
    </location>
</feature>
<feature type="strand" evidence="5">
    <location>
        <begin position="313"/>
        <end position="323"/>
    </location>
</feature>
<feature type="strand" evidence="5">
    <location>
        <begin position="326"/>
        <end position="333"/>
    </location>
</feature>
<feature type="turn" evidence="5">
    <location>
        <begin position="335"/>
        <end position="340"/>
    </location>
</feature>
<feature type="helix" evidence="5">
    <location>
        <begin position="341"/>
        <end position="353"/>
    </location>
</feature>
<proteinExistence type="evidence at protein level"/>
<comment type="function">
    <text evidence="2">Catalyzes the reduction of malonyl-CoA to malonate semialdehyde, a key step in the 3-hydroxypropanoate and the 3-hydroxypropanoate/4-hydroxybutyrate cycles. Can also use succinyl-CoA and succinate semialdehyde as substrates but at a lower rate than malonyl-CoA.</text>
</comment>
<comment type="catalytic activity">
    <reaction evidence="2">
        <text>3-oxopropanoate + NADP(+) + CoA = malonyl-CoA + NADPH + H(+)</text>
        <dbReference type="Rhea" id="RHEA:26446"/>
        <dbReference type="ChEBI" id="CHEBI:15378"/>
        <dbReference type="ChEBI" id="CHEBI:33190"/>
        <dbReference type="ChEBI" id="CHEBI:57287"/>
        <dbReference type="ChEBI" id="CHEBI:57384"/>
        <dbReference type="ChEBI" id="CHEBI:57783"/>
        <dbReference type="ChEBI" id="CHEBI:58349"/>
        <dbReference type="EC" id="1.2.1.75"/>
    </reaction>
</comment>
<comment type="cofactor">
    <cofactor evidence="2">
        <name>Mg(2+)</name>
        <dbReference type="ChEBI" id="CHEBI:18420"/>
    </cofactor>
    <cofactor evidence="2">
        <name>Mn(2+)</name>
        <dbReference type="ChEBI" id="CHEBI:29035"/>
    </cofactor>
    <text evidence="2">Divalent metal cations such as Mg(2+) and Mn(2+) ions at 5 mM.</text>
</comment>
<comment type="activity regulation">
    <text evidence="2">Activated by dithioerythritol (5 mM) and inhibited by the thiol-blocking agent iodoacetamide (0.1 mM).</text>
</comment>
<comment type="biophysicochemical properties">
    <kinetics>
        <KM evidence="2">25 uM for NADP (with 0.2 mM malonyl-CoA)</KM>
        <KM evidence="2">40 uM for malonyl-CoA (with 0.5 mM NADP)</KM>
    </kinetics>
    <phDependence>
        <text evidence="2">Optimum pH is 7.2, with half-maximal activities at pH 6 and 8.</text>
    </phDependence>
    <temperatureDependence>
        <text evidence="2">Optimum temperature is 85 degrees Celsius.</text>
    </temperatureDependence>
</comment>
<comment type="subunit">
    <text evidence="2">Homodimer and possibly a tetramer.</text>
</comment>
<comment type="miscellaneous">
    <text evidence="4">This enzyme contains bound RNA, but the physiological role is not known.</text>
</comment>
<comment type="similarity">
    <text evidence="3">Belongs to the aspartate-semialdehyde dehydrogenase family.</text>
</comment>